<evidence type="ECO:0000255" key="1">
    <source>
        <dbReference type="HAMAP-Rule" id="MF_00658"/>
    </source>
</evidence>
<sequence>MRLWLAAVGRARPGPARDLFEEYRGRLGWPLTLKEVEARKRVAGEELKRLEADLLLAAVPPGAILVALDERGQMLASEAFARRLGTWRDQDSADIAFVIGGADGLAEEVRRRADLLLAFGPMTWPHMLVRGMLAEQIYRAQQILAGHPYHRA</sequence>
<dbReference type="EC" id="2.1.1.177" evidence="1"/>
<dbReference type="EMBL" id="CP000613">
    <property type="protein sequence ID" value="ACI99312.1"/>
    <property type="molecule type" value="Genomic_DNA"/>
</dbReference>
<dbReference type="RefSeq" id="WP_012567097.1">
    <property type="nucleotide sequence ID" value="NC_011420.2"/>
</dbReference>
<dbReference type="SMR" id="B6ITL1"/>
<dbReference type="STRING" id="414684.RC1_1916"/>
<dbReference type="KEGG" id="rce:RC1_1916"/>
<dbReference type="eggNOG" id="COG1576">
    <property type="taxonomic scope" value="Bacteria"/>
</dbReference>
<dbReference type="HOGENOM" id="CLU_100552_1_1_5"/>
<dbReference type="OrthoDB" id="9806643at2"/>
<dbReference type="Proteomes" id="UP000001591">
    <property type="component" value="Chromosome"/>
</dbReference>
<dbReference type="GO" id="GO:0005737">
    <property type="term" value="C:cytoplasm"/>
    <property type="evidence" value="ECO:0007669"/>
    <property type="project" value="UniProtKB-SubCell"/>
</dbReference>
<dbReference type="GO" id="GO:0070038">
    <property type="term" value="F:rRNA (pseudouridine-N3-)-methyltransferase activity"/>
    <property type="evidence" value="ECO:0007669"/>
    <property type="project" value="UniProtKB-UniRule"/>
</dbReference>
<dbReference type="CDD" id="cd18081">
    <property type="entry name" value="RlmH-like"/>
    <property type="match status" value="1"/>
</dbReference>
<dbReference type="Gene3D" id="3.40.1280.10">
    <property type="match status" value="1"/>
</dbReference>
<dbReference type="HAMAP" id="MF_00658">
    <property type="entry name" value="23SrRNA_methyltr_H"/>
    <property type="match status" value="1"/>
</dbReference>
<dbReference type="InterPro" id="IPR029028">
    <property type="entry name" value="Alpha/beta_knot_MTases"/>
</dbReference>
<dbReference type="InterPro" id="IPR003742">
    <property type="entry name" value="RlmH-like"/>
</dbReference>
<dbReference type="InterPro" id="IPR029026">
    <property type="entry name" value="tRNA_m1G_MTases_N"/>
</dbReference>
<dbReference type="NCBIfam" id="NF000989">
    <property type="entry name" value="PRK00103.2-3"/>
    <property type="match status" value="1"/>
</dbReference>
<dbReference type="PANTHER" id="PTHR33603">
    <property type="entry name" value="METHYLTRANSFERASE"/>
    <property type="match status" value="1"/>
</dbReference>
<dbReference type="PANTHER" id="PTHR33603:SF1">
    <property type="entry name" value="RIBOSOMAL RNA LARGE SUBUNIT METHYLTRANSFERASE H"/>
    <property type="match status" value="1"/>
</dbReference>
<dbReference type="Pfam" id="PF02590">
    <property type="entry name" value="SPOUT_MTase"/>
    <property type="match status" value="1"/>
</dbReference>
<dbReference type="PIRSF" id="PIRSF004505">
    <property type="entry name" value="MT_bac"/>
    <property type="match status" value="1"/>
</dbReference>
<dbReference type="SUPFAM" id="SSF75217">
    <property type="entry name" value="alpha/beta knot"/>
    <property type="match status" value="1"/>
</dbReference>
<organism>
    <name type="scientific">Rhodospirillum centenum (strain ATCC 51521 / SW)</name>
    <dbReference type="NCBI Taxonomy" id="414684"/>
    <lineage>
        <taxon>Bacteria</taxon>
        <taxon>Pseudomonadati</taxon>
        <taxon>Pseudomonadota</taxon>
        <taxon>Alphaproteobacteria</taxon>
        <taxon>Rhodospirillales</taxon>
        <taxon>Rhodospirillaceae</taxon>
        <taxon>Rhodospirillum</taxon>
    </lineage>
</organism>
<proteinExistence type="inferred from homology"/>
<name>RLMH_RHOCS</name>
<comment type="function">
    <text evidence="1">Specifically methylates the pseudouridine at position 1915 (m3Psi1915) in 23S rRNA.</text>
</comment>
<comment type="catalytic activity">
    <reaction evidence="1">
        <text>pseudouridine(1915) in 23S rRNA + S-adenosyl-L-methionine = N(3)-methylpseudouridine(1915) in 23S rRNA + S-adenosyl-L-homocysteine + H(+)</text>
        <dbReference type="Rhea" id="RHEA:42752"/>
        <dbReference type="Rhea" id="RHEA-COMP:10221"/>
        <dbReference type="Rhea" id="RHEA-COMP:10222"/>
        <dbReference type="ChEBI" id="CHEBI:15378"/>
        <dbReference type="ChEBI" id="CHEBI:57856"/>
        <dbReference type="ChEBI" id="CHEBI:59789"/>
        <dbReference type="ChEBI" id="CHEBI:65314"/>
        <dbReference type="ChEBI" id="CHEBI:74486"/>
        <dbReference type="EC" id="2.1.1.177"/>
    </reaction>
</comment>
<comment type="subunit">
    <text evidence="1">Homodimer.</text>
</comment>
<comment type="subcellular location">
    <subcellularLocation>
        <location evidence="1">Cytoplasm</location>
    </subcellularLocation>
</comment>
<comment type="similarity">
    <text evidence="1">Belongs to the RNA methyltransferase RlmH family.</text>
</comment>
<gene>
    <name evidence="1" type="primary">rlmH</name>
    <name type="ordered locus">RC1_1916</name>
</gene>
<accession>B6ITL1</accession>
<reference key="1">
    <citation type="submission" date="2007-03" db="EMBL/GenBank/DDBJ databases">
        <title>Genome sequence of Rhodospirillum centenum.</title>
        <authorList>
            <person name="Touchman J.W."/>
            <person name="Bauer C."/>
            <person name="Blankenship R.E."/>
        </authorList>
    </citation>
    <scope>NUCLEOTIDE SEQUENCE [LARGE SCALE GENOMIC DNA]</scope>
    <source>
        <strain>ATCC 51521 / SW</strain>
    </source>
</reference>
<protein>
    <recommendedName>
        <fullName evidence="1">Ribosomal RNA large subunit methyltransferase H</fullName>
        <ecNumber evidence="1">2.1.1.177</ecNumber>
    </recommendedName>
    <alternativeName>
        <fullName evidence="1">23S rRNA (pseudouridine1915-N3)-methyltransferase</fullName>
    </alternativeName>
    <alternativeName>
        <fullName evidence="1">23S rRNA m3Psi1915 methyltransferase</fullName>
    </alternativeName>
    <alternativeName>
        <fullName evidence="1">rRNA (pseudouridine-N3-)-methyltransferase RlmH</fullName>
    </alternativeName>
</protein>
<keyword id="KW-0963">Cytoplasm</keyword>
<keyword id="KW-0489">Methyltransferase</keyword>
<keyword id="KW-1185">Reference proteome</keyword>
<keyword id="KW-0698">rRNA processing</keyword>
<keyword id="KW-0949">S-adenosyl-L-methionine</keyword>
<keyword id="KW-0808">Transferase</keyword>
<feature type="chain" id="PRO_0000366647" description="Ribosomal RNA large subunit methyltransferase H">
    <location>
        <begin position="1"/>
        <end position="152"/>
    </location>
</feature>
<feature type="binding site" evidence="1">
    <location>
        <position position="68"/>
    </location>
    <ligand>
        <name>S-adenosyl-L-methionine</name>
        <dbReference type="ChEBI" id="CHEBI:59789"/>
    </ligand>
</feature>
<feature type="binding site" evidence="1">
    <location>
        <position position="100"/>
    </location>
    <ligand>
        <name>S-adenosyl-L-methionine</name>
        <dbReference type="ChEBI" id="CHEBI:59789"/>
    </ligand>
</feature>
<feature type="binding site" evidence="1">
    <location>
        <begin position="119"/>
        <end position="124"/>
    </location>
    <ligand>
        <name>S-adenosyl-L-methionine</name>
        <dbReference type="ChEBI" id="CHEBI:59789"/>
    </ligand>
</feature>